<gene>
    <name type="primary">cox10</name>
    <name type="ORF">SPBC365.02c</name>
</gene>
<accession>Q9Y7Y4</accession>
<organism>
    <name type="scientific">Schizosaccharomyces pombe (strain 972 / ATCC 24843)</name>
    <name type="common">Fission yeast</name>
    <dbReference type="NCBI Taxonomy" id="284812"/>
    <lineage>
        <taxon>Eukaryota</taxon>
        <taxon>Fungi</taxon>
        <taxon>Dikarya</taxon>
        <taxon>Ascomycota</taxon>
        <taxon>Taphrinomycotina</taxon>
        <taxon>Schizosaccharomycetes</taxon>
        <taxon>Schizosaccharomycetales</taxon>
        <taxon>Schizosaccharomycetaceae</taxon>
        <taxon>Schizosaccharomyces</taxon>
    </lineage>
</organism>
<comment type="function">
    <text evidence="1">Converts protoheme IX and farnesyl diphosphate to heme O.</text>
</comment>
<comment type="catalytic activity">
    <reaction evidence="2">
        <text>heme b + (2E,6E)-farnesyl diphosphate + H2O = Fe(II)-heme o + diphosphate</text>
        <dbReference type="Rhea" id="RHEA:28070"/>
        <dbReference type="ChEBI" id="CHEBI:15377"/>
        <dbReference type="ChEBI" id="CHEBI:33019"/>
        <dbReference type="ChEBI" id="CHEBI:60344"/>
        <dbReference type="ChEBI" id="CHEBI:60530"/>
        <dbReference type="ChEBI" id="CHEBI:175763"/>
        <dbReference type="EC" id="2.5.1.141"/>
    </reaction>
</comment>
<comment type="subcellular location">
    <subcellularLocation>
        <location evidence="1">Mitochondrion membrane</location>
        <topology evidence="1">Multi-pass membrane protein</topology>
    </subcellularLocation>
</comment>
<comment type="similarity">
    <text evidence="4">Belongs to the UbiA prenyltransferase family.</text>
</comment>
<feature type="transit peptide" description="Mitochondrion" evidence="3">
    <location>
        <begin position="1"/>
        <end status="unknown"/>
    </location>
</feature>
<feature type="chain" id="PRO_0000045420" description="Protoheme IX farnesyltransferase, mitochondrial">
    <location>
        <begin status="unknown"/>
        <end position="387"/>
    </location>
</feature>
<feature type="transmembrane region" description="Helical" evidence="3">
    <location>
        <begin position="95"/>
        <end position="115"/>
    </location>
</feature>
<feature type="transmembrane region" description="Helical" evidence="3">
    <location>
        <begin position="117"/>
        <end position="137"/>
    </location>
</feature>
<feature type="transmembrane region" description="Helical" evidence="3">
    <location>
        <begin position="183"/>
        <end position="203"/>
    </location>
</feature>
<feature type="transmembrane region" description="Helical" evidence="3">
    <location>
        <begin position="212"/>
        <end position="232"/>
    </location>
</feature>
<feature type="transmembrane region" description="Helical" evidence="3">
    <location>
        <begin position="242"/>
        <end position="262"/>
    </location>
</feature>
<feature type="transmembrane region" description="Helical" evidence="3">
    <location>
        <begin position="284"/>
        <end position="306"/>
    </location>
</feature>
<feature type="transmembrane region" description="Helical" evidence="3">
    <location>
        <begin position="311"/>
        <end position="330"/>
    </location>
</feature>
<feature type="transmembrane region" description="Helical" evidence="3">
    <location>
        <begin position="345"/>
        <end position="365"/>
    </location>
</feature>
<dbReference type="EC" id="2.5.1.141" evidence="2"/>
<dbReference type="EMBL" id="CU329671">
    <property type="protein sequence ID" value="CAB44754.1"/>
    <property type="molecule type" value="Genomic_DNA"/>
</dbReference>
<dbReference type="PIR" id="T40309">
    <property type="entry name" value="T40309"/>
</dbReference>
<dbReference type="RefSeq" id="NP_596031.1">
    <property type="nucleotide sequence ID" value="NM_001021941.2"/>
</dbReference>
<dbReference type="SMR" id="Q9Y7Y4"/>
<dbReference type="BioGRID" id="277460">
    <property type="interactions" value="5"/>
</dbReference>
<dbReference type="FunCoup" id="Q9Y7Y4">
    <property type="interactions" value="476"/>
</dbReference>
<dbReference type="STRING" id="284812.Q9Y7Y4"/>
<dbReference type="PaxDb" id="4896-SPBC365.02c.1"/>
<dbReference type="EnsemblFungi" id="SPBC365.02c.1">
    <property type="protein sequence ID" value="SPBC365.02c.1:pep"/>
    <property type="gene ID" value="SPBC365.02c"/>
</dbReference>
<dbReference type="GeneID" id="2540944"/>
<dbReference type="KEGG" id="spo:2540944"/>
<dbReference type="PomBase" id="SPBC365.02c">
    <property type="gene designation" value="cox10"/>
</dbReference>
<dbReference type="VEuPathDB" id="FungiDB:SPBC365.02c"/>
<dbReference type="eggNOG" id="KOG1380">
    <property type="taxonomic scope" value="Eukaryota"/>
</dbReference>
<dbReference type="HOGENOM" id="CLU_029631_3_2_1"/>
<dbReference type="InParanoid" id="Q9Y7Y4"/>
<dbReference type="OMA" id="HFWAIGW"/>
<dbReference type="PhylomeDB" id="Q9Y7Y4"/>
<dbReference type="Reactome" id="R-SPO-189451">
    <property type="pathway name" value="Heme biosynthesis"/>
</dbReference>
<dbReference type="PRO" id="PR:Q9Y7Y4"/>
<dbReference type="Proteomes" id="UP000002485">
    <property type="component" value="Chromosome II"/>
</dbReference>
<dbReference type="GO" id="GO:0005743">
    <property type="term" value="C:mitochondrial inner membrane"/>
    <property type="evidence" value="ECO:0000303"/>
    <property type="project" value="PomBase"/>
</dbReference>
<dbReference type="GO" id="GO:0005739">
    <property type="term" value="C:mitochondrion"/>
    <property type="evidence" value="ECO:0007005"/>
    <property type="project" value="PomBase"/>
</dbReference>
<dbReference type="GO" id="GO:0008495">
    <property type="term" value="F:protoheme IX farnesyltransferase activity"/>
    <property type="evidence" value="ECO:0000318"/>
    <property type="project" value="GO_Central"/>
</dbReference>
<dbReference type="GO" id="GO:0006784">
    <property type="term" value="P:heme A biosynthetic process"/>
    <property type="evidence" value="ECO:0000315"/>
    <property type="project" value="PomBase"/>
</dbReference>
<dbReference type="CDD" id="cd13957">
    <property type="entry name" value="PT_UbiA_Cox10"/>
    <property type="match status" value="1"/>
</dbReference>
<dbReference type="FunFam" id="1.10.357.140:FF:000004">
    <property type="entry name" value="Protoheme IX farnesyltransferase, mitochondrial"/>
    <property type="match status" value="1"/>
</dbReference>
<dbReference type="Gene3D" id="1.10.357.140">
    <property type="entry name" value="UbiA prenyltransferase"/>
    <property type="match status" value="1"/>
</dbReference>
<dbReference type="HAMAP" id="MF_00154">
    <property type="entry name" value="CyoE_CtaB"/>
    <property type="match status" value="1"/>
</dbReference>
<dbReference type="InterPro" id="IPR006369">
    <property type="entry name" value="Protohaem_IX_farnesylTrfase"/>
</dbReference>
<dbReference type="InterPro" id="IPR016315">
    <property type="entry name" value="Protohaem_IX_farnesylTrfase_mt"/>
</dbReference>
<dbReference type="InterPro" id="IPR000537">
    <property type="entry name" value="UbiA_prenyltransferase"/>
</dbReference>
<dbReference type="InterPro" id="IPR030470">
    <property type="entry name" value="UbiA_prenylTrfase_CS"/>
</dbReference>
<dbReference type="InterPro" id="IPR044878">
    <property type="entry name" value="UbiA_sf"/>
</dbReference>
<dbReference type="NCBIfam" id="TIGR01473">
    <property type="entry name" value="cyoE_ctaB"/>
    <property type="match status" value="1"/>
</dbReference>
<dbReference type="PANTHER" id="PTHR43448">
    <property type="entry name" value="PROTOHEME IX FARNESYLTRANSFERASE, MITOCHONDRIAL"/>
    <property type="match status" value="1"/>
</dbReference>
<dbReference type="PANTHER" id="PTHR43448:SF2">
    <property type="entry name" value="PROTOHEME IX FARNESYLTRANSFERASE, MITOCHONDRIAL"/>
    <property type="match status" value="1"/>
</dbReference>
<dbReference type="Pfam" id="PF01040">
    <property type="entry name" value="UbiA"/>
    <property type="match status" value="1"/>
</dbReference>
<dbReference type="PIRSF" id="PIRSF001773">
    <property type="entry name" value="COX10"/>
    <property type="match status" value="1"/>
</dbReference>
<dbReference type="PROSITE" id="PS00943">
    <property type="entry name" value="UBIA"/>
    <property type="match status" value="1"/>
</dbReference>
<proteinExistence type="inferred from homology"/>
<evidence type="ECO:0000250" key="1"/>
<evidence type="ECO:0000250" key="2">
    <source>
        <dbReference type="UniProtKB" id="P24009"/>
    </source>
</evidence>
<evidence type="ECO:0000255" key="3"/>
<evidence type="ECO:0000305" key="4"/>
<name>COX10_SCHPO</name>
<sequence>MFHILNKGSSKSCIYTRPCLKRFYHQHYEHTGKLSRTFFSPTHIKYNRLSTLDTSTSTANAAPDPQVLTFLSKRMQAAPLYPKPSAFLELGKPRLTVLVVLSTMSSYALAPYPGLSFNTLAWLTMGTALCSISANAFNQSMEPMLDCQMARTRSRPIPRGAIRPEYAWLFATLTGIAGTSMSFLVNPTVGWLGLGNIVLYMGIYTPLKRISIVNTWVGSLVGAIPPLMGWAACSGGDLLSHPGGLITAAMLFAWQFPHFNAFSTMVKDDYKKCGYQMMAWKNPALNARVSLRYALAFLPLSYAYISTGLVGPWYAVPATGTNMFLIARAWKFYRNRNYQNARSLFFASLLHLPLLFTLTLACHMIKVWNDSDSKNPVLGSEEDTLKY</sequence>
<protein>
    <recommendedName>
        <fullName>Protoheme IX farnesyltransferase, mitochondrial</fullName>
        <ecNumber evidence="2">2.5.1.141</ecNumber>
    </recommendedName>
    <alternativeName>
        <fullName>Heme O synthase</fullName>
    </alternativeName>
</protein>
<reference key="1">
    <citation type="journal article" date="2002" name="Nature">
        <title>The genome sequence of Schizosaccharomyces pombe.</title>
        <authorList>
            <person name="Wood V."/>
            <person name="Gwilliam R."/>
            <person name="Rajandream M.A."/>
            <person name="Lyne M.H."/>
            <person name="Lyne R."/>
            <person name="Stewart A."/>
            <person name="Sgouros J.G."/>
            <person name="Peat N."/>
            <person name="Hayles J."/>
            <person name="Baker S.G."/>
            <person name="Basham D."/>
            <person name="Bowman S."/>
            <person name="Brooks K."/>
            <person name="Brown D."/>
            <person name="Brown S."/>
            <person name="Chillingworth T."/>
            <person name="Churcher C.M."/>
            <person name="Collins M."/>
            <person name="Connor R."/>
            <person name="Cronin A."/>
            <person name="Davis P."/>
            <person name="Feltwell T."/>
            <person name="Fraser A."/>
            <person name="Gentles S."/>
            <person name="Goble A."/>
            <person name="Hamlin N."/>
            <person name="Harris D.E."/>
            <person name="Hidalgo J."/>
            <person name="Hodgson G."/>
            <person name="Holroyd S."/>
            <person name="Hornsby T."/>
            <person name="Howarth S."/>
            <person name="Huckle E.J."/>
            <person name="Hunt S."/>
            <person name="Jagels K."/>
            <person name="James K.D."/>
            <person name="Jones L."/>
            <person name="Jones M."/>
            <person name="Leather S."/>
            <person name="McDonald S."/>
            <person name="McLean J."/>
            <person name="Mooney P."/>
            <person name="Moule S."/>
            <person name="Mungall K.L."/>
            <person name="Murphy L.D."/>
            <person name="Niblett D."/>
            <person name="Odell C."/>
            <person name="Oliver K."/>
            <person name="O'Neil S."/>
            <person name="Pearson D."/>
            <person name="Quail M.A."/>
            <person name="Rabbinowitsch E."/>
            <person name="Rutherford K.M."/>
            <person name="Rutter S."/>
            <person name="Saunders D."/>
            <person name="Seeger K."/>
            <person name="Sharp S."/>
            <person name="Skelton J."/>
            <person name="Simmonds M.N."/>
            <person name="Squares R."/>
            <person name="Squares S."/>
            <person name="Stevens K."/>
            <person name="Taylor K."/>
            <person name="Taylor R.G."/>
            <person name="Tivey A."/>
            <person name="Walsh S.V."/>
            <person name="Warren T."/>
            <person name="Whitehead S."/>
            <person name="Woodward J.R."/>
            <person name="Volckaert G."/>
            <person name="Aert R."/>
            <person name="Robben J."/>
            <person name="Grymonprez B."/>
            <person name="Weltjens I."/>
            <person name="Vanstreels E."/>
            <person name="Rieger M."/>
            <person name="Schaefer M."/>
            <person name="Mueller-Auer S."/>
            <person name="Gabel C."/>
            <person name="Fuchs M."/>
            <person name="Duesterhoeft A."/>
            <person name="Fritzc C."/>
            <person name="Holzer E."/>
            <person name="Moestl D."/>
            <person name="Hilbert H."/>
            <person name="Borzym K."/>
            <person name="Langer I."/>
            <person name="Beck A."/>
            <person name="Lehrach H."/>
            <person name="Reinhardt R."/>
            <person name="Pohl T.M."/>
            <person name="Eger P."/>
            <person name="Zimmermann W."/>
            <person name="Wedler H."/>
            <person name="Wambutt R."/>
            <person name="Purnelle B."/>
            <person name="Goffeau A."/>
            <person name="Cadieu E."/>
            <person name="Dreano S."/>
            <person name="Gloux S."/>
            <person name="Lelaure V."/>
            <person name="Mottier S."/>
            <person name="Galibert F."/>
            <person name="Aves S.J."/>
            <person name="Xiang Z."/>
            <person name="Hunt C."/>
            <person name="Moore K."/>
            <person name="Hurst S.M."/>
            <person name="Lucas M."/>
            <person name="Rochet M."/>
            <person name="Gaillardin C."/>
            <person name="Tallada V.A."/>
            <person name="Garzon A."/>
            <person name="Thode G."/>
            <person name="Daga R.R."/>
            <person name="Cruzado L."/>
            <person name="Jimenez J."/>
            <person name="Sanchez M."/>
            <person name="del Rey F."/>
            <person name="Benito J."/>
            <person name="Dominguez A."/>
            <person name="Revuelta J.L."/>
            <person name="Moreno S."/>
            <person name="Armstrong J."/>
            <person name="Forsburg S.L."/>
            <person name="Cerutti L."/>
            <person name="Lowe T."/>
            <person name="McCombie W.R."/>
            <person name="Paulsen I."/>
            <person name="Potashkin J."/>
            <person name="Shpakovski G.V."/>
            <person name="Ussery D."/>
            <person name="Barrell B.G."/>
            <person name="Nurse P."/>
        </authorList>
    </citation>
    <scope>NUCLEOTIDE SEQUENCE [LARGE SCALE GENOMIC DNA]</scope>
    <source>
        <strain>972 / ATCC 24843</strain>
    </source>
</reference>
<keyword id="KW-0350">Heme biosynthesis</keyword>
<keyword id="KW-0472">Membrane</keyword>
<keyword id="KW-0496">Mitochondrion</keyword>
<keyword id="KW-1185">Reference proteome</keyword>
<keyword id="KW-0808">Transferase</keyword>
<keyword id="KW-0809">Transit peptide</keyword>
<keyword id="KW-0812">Transmembrane</keyword>
<keyword id="KW-1133">Transmembrane helix</keyword>